<keyword id="KW-0963">Cytoplasm</keyword>
<keyword id="KW-0255">Endonuclease</keyword>
<keyword id="KW-0378">Hydrolase</keyword>
<keyword id="KW-0460">Magnesium</keyword>
<keyword id="KW-0479">Metal-binding</keyword>
<keyword id="KW-0507">mRNA processing</keyword>
<keyword id="KW-0540">Nuclease</keyword>
<keyword id="KW-0694">RNA-binding</keyword>
<keyword id="KW-0698">rRNA processing</keyword>
<keyword id="KW-0699">rRNA-binding</keyword>
<keyword id="KW-0819">tRNA processing</keyword>
<gene>
    <name evidence="1" type="primary">rnc</name>
    <name type="ordered locus">FTA_0587</name>
</gene>
<evidence type="ECO:0000255" key="1">
    <source>
        <dbReference type="HAMAP-Rule" id="MF_00104"/>
    </source>
</evidence>
<proteinExistence type="inferred from homology"/>
<protein>
    <recommendedName>
        <fullName evidence="1">Ribonuclease 3</fullName>
        <ecNumber evidence="1">3.1.26.3</ecNumber>
    </recommendedName>
    <alternativeName>
        <fullName evidence="1">Ribonuclease III</fullName>
        <shortName evidence="1">RNase III</shortName>
    </alternativeName>
</protein>
<sequence length="230" mass="26204">MVPEYSRFYNILGYNFKDYTLLIRALTHRSKTKKNYERLEFLGDSVLSFVIAEVLYKQFTDLAEGKLSQLRSKLVKGTTLAQLASSLKMDEYIILGASEQGGNKREKILEDVFEAVIGAIYLDSDFATVKKVILKWYQPIISSINLDTIKVKDSKSKLQEILLQNALSLPEYSIETIDGKDHEQQFTVVAVSKDLNLRVKAQGTSRKKAEQKTAEKMIEMLSQQGLHEKK</sequence>
<name>RNC_FRATF</name>
<accession>A7NAR0</accession>
<dbReference type="EC" id="3.1.26.3" evidence="1"/>
<dbReference type="EMBL" id="CP000803">
    <property type="protein sequence ID" value="ABU61063.1"/>
    <property type="molecule type" value="Genomic_DNA"/>
</dbReference>
<dbReference type="RefSeq" id="WP_010032923.1">
    <property type="nucleotide sequence ID" value="NC_009749.1"/>
</dbReference>
<dbReference type="SMR" id="A7NAR0"/>
<dbReference type="KEGG" id="fta:FTA_0587"/>
<dbReference type="HOGENOM" id="CLU_000907_1_1_6"/>
<dbReference type="GO" id="GO:0005737">
    <property type="term" value="C:cytoplasm"/>
    <property type="evidence" value="ECO:0007669"/>
    <property type="project" value="UniProtKB-SubCell"/>
</dbReference>
<dbReference type="GO" id="GO:0003725">
    <property type="term" value="F:double-stranded RNA binding"/>
    <property type="evidence" value="ECO:0007669"/>
    <property type="project" value="TreeGrafter"/>
</dbReference>
<dbReference type="GO" id="GO:0046872">
    <property type="term" value="F:metal ion binding"/>
    <property type="evidence" value="ECO:0007669"/>
    <property type="project" value="UniProtKB-KW"/>
</dbReference>
<dbReference type="GO" id="GO:0004525">
    <property type="term" value="F:ribonuclease III activity"/>
    <property type="evidence" value="ECO:0007669"/>
    <property type="project" value="UniProtKB-UniRule"/>
</dbReference>
<dbReference type="GO" id="GO:0019843">
    <property type="term" value="F:rRNA binding"/>
    <property type="evidence" value="ECO:0007669"/>
    <property type="project" value="UniProtKB-KW"/>
</dbReference>
<dbReference type="GO" id="GO:0006397">
    <property type="term" value="P:mRNA processing"/>
    <property type="evidence" value="ECO:0007669"/>
    <property type="project" value="UniProtKB-UniRule"/>
</dbReference>
<dbReference type="GO" id="GO:0010468">
    <property type="term" value="P:regulation of gene expression"/>
    <property type="evidence" value="ECO:0007669"/>
    <property type="project" value="TreeGrafter"/>
</dbReference>
<dbReference type="GO" id="GO:0006364">
    <property type="term" value="P:rRNA processing"/>
    <property type="evidence" value="ECO:0007669"/>
    <property type="project" value="UniProtKB-UniRule"/>
</dbReference>
<dbReference type="GO" id="GO:0008033">
    <property type="term" value="P:tRNA processing"/>
    <property type="evidence" value="ECO:0007669"/>
    <property type="project" value="UniProtKB-KW"/>
</dbReference>
<dbReference type="CDD" id="cd10845">
    <property type="entry name" value="DSRM_RNAse_III_family"/>
    <property type="match status" value="1"/>
</dbReference>
<dbReference type="CDD" id="cd00593">
    <property type="entry name" value="RIBOc"/>
    <property type="match status" value="1"/>
</dbReference>
<dbReference type="FunFam" id="1.10.1520.10:FF:000001">
    <property type="entry name" value="Ribonuclease 3"/>
    <property type="match status" value="1"/>
</dbReference>
<dbReference type="Gene3D" id="3.30.160.20">
    <property type="match status" value="1"/>
</dbReference>
<dbReference type="Gene3D" id="1.10.1520.10">
    <property type="entry name" value="Ribonuclease III domain"/>
    <property type="match status" value="1"/>
</dbReference>
<dbReference type="HAMAP" id="MF_00104">
    <property type="entry name" value="RNase_III"/>
    <property type="match status" value="1"/>
</dbReference>
<dbReference type="InterPro" id="IPR014720">
    <property type="entry name" value="dsRBD_dom"/>
</dbReference>
<dbReference type="InterPro" id="IPR011907">
    <property type="entry name" value="RNase_III"/>
</dbReference>
<dbReference type="InterPro" id="IPR000999">
    <property type="entry name" value="RNase_III_dom"/>
</dbReference>
<dbReference type="InterPro" id="IPR036389">
    <property type="entry name" value="RNase_III_sf"/>
</dbReference>
<dbReference type="NCBIfam" id="TIGR02191">
    <property type="entry name" value="RNaseIII"/>
    <property type="match status" value="1"/>
</dbReference>
<dbReference type="PANTHER" id="PTHR11207:SF0">
    <property type="entry name" value="RIBONUCLEASE 3"/>
    <property type="match status" value="1"/>
</dbReference>
<dbReference type="PANTHER" id="PTHR11207">
    <property type="entry name" value="RIBONUCLEASE III"/>
    <property type="match status" value="1"/>
</dbReference>
<dbReference type="Pfam" id="PF00035">
    <property type="entry name" value="dsrm"/>
    <property type="match status" value="1"/>
</dbReference>
<dbReference type="Pfam" id="PF14622">
    <property type="entry name" value="Ribonucleas_3_3"/>
    <property type="match status" value="1"/>
</dbReference>
<dbReference type="SMART" id="SM00358">
    <property type="entry name" value="DSRM"/>
    <property type="match status" value="1"/>
</dbReference>
<dbReference type="SMART" id="SM00535">
    <property type="entry name" value="RIBOc"/>
    <property type="match status" value="1"/>
</dbReference>
<dbReference type="SUPFAM" id="SSF54768">
    <property type="entry name" value="dsRNA-binding domain-like"/>
    <property type="match status" value="1"/>
</dbReference>
<dbReference type="SUPFAM" id="SSF69065">
    <property type="entry name" value="RNase III domain-like"/>
    <property type="match status" value="1"/>
</dbReference>
<dbReference type="PROSITE" id="PS50137">
    <property type="entry name" value="DS_RBD"/>
    <property type="match status" value="1"/>
</dbReference>
<dbReference type="PROSITE" id="PS00517">
    <property type="entry name" value="RNASE_3_1"/>
    <property type="match status" value="1"/>
</dbReference>
<dbReference type="PROSITE" id="PS50142">
    <property type="entry name" value="RNASE_3_2"/>
    <property type="match status" value="1"/>
</dbReference>
<reference key="1">
    <citation type="journal article" date="2009" name="PLoS ONE">
        <title>Complete genome sequence of Francisella tularensis subspecies holarctica FTNF002-00.</title>
        <authorList>
            <person name="Barabote R.D."/>
            <person name="Xie G."/>
            <person name="Brettin T.S."/>
            <person name="Hinrichs S.H."/>
            <person name="Fey P.D."/>
            <person name="Jay J.J."/>
            <person name="Engle J.L."/>
            <person name="Godbole S.D."/>
            <person name="Noronha J.M."/>
            <person name="Scheuermann R.H."/>
            <person name="Zhou L.W."/>
            <person name="Lion C."/>
            <person name="Dempsey M.P."/>
        </authorList>
    </citation>
    <scope>NUCLEOTIDE SEQUENCE [LARGE SCALE GENOMIC DNA]</scope>
    <source>
        <strain>FTNF002-00 / FTA</strain>
    </source>
</reference>
<comment type="function">
    <text evidence="1">Digests double-stranded RNA. Involved in the processing of primary rRNA transcript to yield the immediate precursors to the large and small rRNAs (23S and 16S). Processes some mRNAs, and tRNAs when they are encoded in the rRNA operon. Processes pre-crRNA and tracrRNA of type II CRISPR loci if present in the organism.</text>
</comment>
<comment type="catalytic activity">
    <reaction evidence="1">
        <text>Endonucleolytic cleavage to 5'-phosphomonoester.</text>
        <dbReference type="EC" id="3.1.26.3"/>
    </reaction>
</comment>
<comment type="cofactor">
    <cofactor evidence="1">
        <name>Mg(2+)</name>
        <dbReference type="ChEBI" id="CHEBI:18420"/>
    </cofactor>
</comment>
<comment type="subunit">
    <text evidence="1">Homodimer.</text>
</comment>
<comment type="subcellular location">
    <subcellularLocation>
        <location evidence="1">Cytoplasm</location>
    </subcellularLocation>
</comment>
<comment type="similarity">
    <text evidence="1">Belongs to the ribonuclease III family.</text>
</comment>
<organism>
    <name type="scientific">Francisella tularensis subsp. holarctica (strain FTNF002-00 / FTA)</name>
    <dbReference type="NCBI Taxonomy" id="458234"/>
    <lineage>
        <taxon>Bacteria</taxon>
        <taxon>Pseudomonadati</taxon>
        <taxon>Pseudomonadota</taxon>
        <taxon>Gammaproteobacteria</taxon>
        <taxon>Thiotrichales</taxon>
        <taxon>Francisellaceae</taxon>
        <taxon>Francisella</taxon>
    </lineage>
</organism>
<feature type="chain" id="PRO_1000075755" description="Ribonuclease 3">
    <location>
        <begin position="1"/>
        <end position="230"/>
    </location>
</feature>
<feature type="domain" description="RNase III" evidence="1">
    <location>
        <begin position="5"/>
        <end position="125"/>
    </location>
</feature>
<feature type="domain" description="DRBM" evidence="1">
    <location>
        <begin position="153"/>
        <end position="223"/>
    </location>
</feature>
<feature type="active site" evidence="1">
    <location>
        <position position="44"/>
    </location>
</feature>
<feature type="active site" evidence="1">
    <location>
        <position position="114"/>
    </location>
</feature>
<feature type="binding site" evidence="1">
    <location>
        <position position="40"/>
    </location>
    <ligand>
        <name>Mg(2+)</name>
        <dbReference type="ChEBI" id="CHEBI:18420"/>
    </ligand>
</feature>
<feature type="binding site" evidence="1">
    <location>
        <position position="111"/>
    </location>
    <ligand>
        <name>Mg(2+)</name>
        <dbReference type="ChEBI" id="CHEBI:18420"/>
    </ligand>
</feature>
<feature type="binding site" evidence="1">
    <location>
        <position position="114"/>
    </location>
    <ligand>
        <name>Mg(2+)</name>
        <dbReference type="ChEBI" id="CHEBI:18420"/>
    </ligand>
</feature>